<evidence type="ECO:0000250" key="1">
    <source>
        <dbReference type="UniProtKB" id="Q7LFL8"/>
    </source>
</evidence>
<evidence type="ECO:0000255" key="2"/>
<evidence type="ECO:0000255" key="3">
    <source>
        <dbReference type="PROSITE-ProRule" id="PRU00509"/>
    </source>
</evidence>
<evidence type="ECO:0000256" key="4">
    <source>
        <dbReference type="SAM" id="MobiDB-lite"/>
    </source>
</evidence>
<evidence type="ECO:0000269" key="5">
    <source>
    </source>
</evidence>
<feature type="chain" id="PRO_0000317551" description="CXXC-type zinc finger protein 5">
    <location>
        <begin position="1"/>
        <end position="316"/>
    </location>
</feature>
<feature type="zinc finger region" description="CXXC-type" evidence="3">
    <location>
        <begin position="250"/>
        <end position="291"/>
    </location>
</feature>
<feature type="region of interest" description="Disordered" evidence="4">
    <location>
        <begin position="1"/>
        <end position="95"/>
    </location>
</feature>
<feature type="short sequence motif" description="Nuclear localization signal" evidence="2">
    <location>
        <begin position="251"/>
        <end position="256"/>
    </location>
</feature>
<feature type="compositionally biased region" description="Gly residues" evidence="4">
    <location>
        <begin position="1"/>
        <end position="10"/>
    </location>
</feature>
<feature type="compositionally biased region" description="Low complexity" evidence="4">
    <location>
        <begin position="11"/>
        <end position="27"/>
    </location>
</feature>
<feature type="compositionally biased region" description="Low complexity" evidence="4">
    <location>
        <begin position="36"/>
        <end position="50"/>
    </location>
</feature>
<feature type="binding site" evidence="3">
    <location>
        <position position="257"/>
    </location>
    <ligand>
        <name>Zn(2+)</name>
        <dbReference type="ChEBI" id="CHEBI:29105"/>
        <label>1</label>
    </ligand>
</feature>
<feature type="binding site" evidence="3">
    <location>
        <position position="260"/>
    </location>
    <ligand>
        <name>Zn(2+)</name>
        <dbReference type="ChEBI" id="CHEBI:29105"/>
        <label>1</label>
    </ligand>
</feature>
<feature type="binding site" evidence="3">
    <location>
        <position position="263"/>
    </location>
    <ligand>
        <name>Zn(2+)</name>
        <dbReference type="ChEBI" id="CHEBI:29105"/>
        <label>1</label>
    </ligand>
</feature>
<feature type="binding site" evidence="3">
    <location>
        <position position="269"/>
    </location>
    <ligand>
        <name>Zn(2+)</name>
        <dbReference type="ChEBI" id="CHEBI:29105"/>
        <label>2</label>
    </ligand>
</feature>
<feature type="binding site" evidence="3">
    <location>
        <position position="272"/>
    </location>
    <ligand>
        <name>Zn(2+)</name>
        <dbReference type="ChEBI" id="CHEBI:29105"/>
        <label>2</label>
    </ligand>
</feature>
<feature type="binding site" evidence="3">
    <location>
        <position position="275"/>
    </location>
    <ligand>
        <name>Zn(2+)</name>
        <dbReference type="ChEBI" id="CHEBI:29105"/>
        <label>2</label>
    </ligand>
</feature>
<feature type="binding site" evidence="3">
    <location>
        <position position="285"/>
    </location>
    <ligand>
        <name>Zn(2+)</name>
        <dbReference type="ChEBI" id="CHEBI:29105"/>
        <label>2</label>
    </ligand>
</feature>
<feature type="binding site" evidence="3">
    <location>
        <position position="290"/>
    </location>
    <ligand>
        <name>Zn(2+)</name>
        <dbReference type="ChEBI" id="CHEBI:29105"/>
        <label>1</label>
    </ligand>
</feature>
<comment type="function">
    <text evidence="1 5">May indirectly participate in activation of the NF-kappa-B and MAPK pathways (By similarity). Required for DNA damage-induced ATM phosphorylation, p53 activation and cell cycle arrest. Involved in myelopoiesis (By similarity). Acts as a mediator of BMP4-mediated modulation of canonical Wnt signaling activity in neural stem cells (PubMed:19001364). Binds to the oxygen responsive element of COX4I2 and represses its transcription under hypoxia conditions (4% oxygen), as well as normoxia conditions (20% oxygen) (By similarity). May repress COX4I2 transactivation induced by CHCHD2 and RBPJ (By similarity). Binds preferentially to DNA containing cytidine-phosphate-guanosine (CpG) dinucleotides over CpH (H=A, T, and C), hemimethylated-CpG and hemimethylated-hydroxymethyl-CpG (By similarity).</text>
</comment>
<comment type="subunit">
    <text evidence="1 5">Interacts with DVL1 (PubMed:19001364). Interacts with RBPJ (By similarity).</text>
</comment>
<comment type="subcellular location">
    <subcellularLocation>
        <location evidence="5">Nucleus</location>
    </subcellularLocation>
    <subcellularLocation>
        <location evidence="5">Cytoplasm</location>
    </subcellularLocation>
    <text>Colocalizes with DVL1 in large bodies localized just outside the nuclear membrane.</text>
</comment>
<comment type="tissue specificity">
    <text evidence="5">Expressed in neural stem cells (at protein level). Expressed in the dorsal telencephalon.</text>
</comment>
<comment type="induction">
    <text evidence="5">Up-regulated by BMP4.</text>
</comment>
<comment type="domain">
    <text evidence="1">The CXXC zinc finger mediates binding to CpG-DNA.</text>
</comment>
<organism>
    <name type="scientific">Rattus norvegicus</name>
    <name type="common">Rat</name>
    <dbReference type="NCBI Taxonomy" id="10116"/>
    <lineage>
        <taxon>Eukaryota</taxon>
        <taxon>Metazoa</taxon>
        <taxon>Chordata</taxon>
        <taxon>Craniata</taxon>
        <taxon>Vertebrata</taxon>
        <taxon>Euteleostomi</taxon>
        <taxon>Mammalia</taxon>
        <taxon>Eutheria</taxon>
        <taxon>Euarchontoglires</taxon>
        <taxon>Glires</taxon>
        <taxon>Rodentia</taxon>
        <taxon>Myomorpha</taxon>
        <taxon>Muroidea</taxon>
        <taxon>Muridae</taxon>
        <taxon>Murinae</taxon>
        <taxon>Rattus</taxon>
    </lineage>
</organism>
<gene>
    <name type="primary">Cxxc5</name>
</gene>
<keyword id="KW-0963">Cytoplasm</keyword>
<keyword id="KW-0238">DNA-binding</keyword>
<keyword id="KW-0479">Metal-binding</keyword>
<keyword id="KW-0539">Nucleus</keyword>
<keyword id="KW-1185">Reference proteome</keyword>
<keyword id="KW-0862">Zinc</keyword>
<keyword id="KW-0863">Zinc-finger</keyword>
<proteinExistence type="evidence at protein level"/>
<reference key="1">
    <citation type="journal article" date="2004" name="Genome Res.">
        <title>The status, quality, and expansion of the NIH full-length cDNA project: the Mammalian Gene Collection (MGC).</title>
        <authorList>
            <consortium name="The MGC Project Team"/>
        </authorList>
    </citation>
    <scope>NUCLEOTIDE SEQUENCE [LARGE SCALE MRNA]</scope>
    <source>
        <tissue>Testis</tissue>
    </source>
</reference>
<reference key="2">
    <citation type="journal article" date="2009" name="J. Biol. Chem.">
        <title>CXXC5 is a novel BMP4-regulated modulator of Wnt signaling in neural stem cells.</title>
        <authorList>
            <person name="Andersson T."/>
            <person name="Soedersten E."/>
            <person name="Duckworth J.K."/>
            <person name="Cascante A."/>
            <person name="Fritz N."/>
            <person name="Sacchetti P."/>
            <person name="Cervenka I."/>
            <person name="Bryja V."/>
            <person name="Hermanson O."/>
        </authorList>
    </citation>
    <scope>FUNCTION</scope>
    <scope>INTERACTION WITH DVL1</scope>
    <scope>SUBCELLULAR LOCATION</scope>
    <scope>INDUCTION</scope>
    <scope>TISSUE SPECIFICITY</scope>
</reference>
<dbReference type="EMBL" id="BC083622">
    <property type="protein sequence ID" value="AAH83622.1"/>
    <property type="molecule type" value="mRNA"/>
</dbReference>
<dbReference type="RefSeq" id="NP_001007629.1">
    <property type="nucleotide sequence ID" value="NM_001007628.2"/>
</dbReference>
<dbReference type="RefSeq" id="XP_017456389.1">
    <property type="nucleotide sequence ID" value="XM_017600900.3"/>
</dbReference>
<dbReference type="RefSeq" id="XP_017456390.1">
    <property type="nucleotide sequence ID" value="XM_017600901.1"/>
</dbReference>
<dbReference type="RefSeq" id="XP_017456391.1">
    <property type="nucleotide sequence ID" value="XM_017600902.3"/>
</dbReference>
<dbReference type="RefSeq" id="XP_017456392.1">
    <property type="nucleotide sequence ID" value="XM_017600903.3"/>
</dbReference>
<dbReference type="RefSeq" id="XP_017456393.1">
    <property type="nucleotide sequence ID" value="XM_017600904.3"/>
</dbReference>
<dbReference type="RefSeq" id="XP_038952639.1">
    <property type="nucleotide sequence ID" value="XM_039096711.1"/>
</dbReference>
<dbReference type="RefSeq" id="XP_038952640.1">
    <property type="nucleotide sequence ID" value="XM_039096712.2"/>
</dbReference>
<dbReference type="RefSeq" id="XP_038952641.1">
    <property type="nucleotide sequence ID" value="XM_039096713.2"/>
</dbReference>
<dbReference type="RefSeq" id="XP_038952642.1">
    <property type="nucleotide sequence ID" value="XM_039096714.2"/>
</dbReference>
<dbReference type="RefSeq" id="XP_038952643.1">
    <property type="nucleotide sequence ID" value="XM_039096715.2"/>
</dbReference>
<dbReference type="RefSeq" id="XP_038952644.1">
    <property type="nucleotide sequence ID" value="XM_039096716.2"/>
</dbReference>
<dbReference type="RefSeq" id="XP_063133285.1">
    <property type="nucleotide sequence ID" value="XM_063277215.1"/>
</dbReference>
<dbReference type="SMR" id="Q5XIQ3"/>
<dbReference type="FunCoup" id="Q5XIQ3">
    <property type="interactions" value="551"/>
</dbReference>
<dbReference type="STRING" id="10116.ENSRNOP00000069122"/>
<dbReference type="PhosphoSitePlus" id="Q5XIQ3"/>
<dbReference type="PaxDb" id="10116-ENSRNOP00000042976"/>
<dbReference type="Ensembl" id="ENSRNOT00000045795.3">
    <property type="protein sequence ID" value="ENSRNOP00000042976.2"/>
    <property type="gene ID" value="ENSRNOG00000032878.4"/>
</dbReference>
<dbReference type="GeneID" id="291670"/>
<dbReference type="KEGG" id="rno:291670"/>
<dbReference type="UCSC" id="RGD:1359466">
    <property type="organism name" value="rat"/>
</dbReference>
<dbReference type="AGR" id="RGD:1359466"/>
<dbReference type="CTD" id="51523"/>
<dbReference type="RGD" id="1359466">
    <property type="gene designation" value="Cxxc5"/>
</dbReference>
<dbReference type="eggNOG" id="ENOG502QT2M">
    <property type="taxonomic scope" value="Eukaryota"/>
</dbReference>
<dbReference type="GeneTree" id="ENSGT00940000154108"/>
<dbReference type="InParanoid" id="Q5XIQ3"/>
<dbReference type="OMA" id="ANGHDPP"/>
<dbReference type="OrthoDB" id="8854879at2759"/>
<dbReference type="PhylomeDB" id="Q5XIQ3"/>
<dbReference type="TreeFam" id="TF326617"/>
<dbReference type="PRO" id="PR:Q5XIQ3"/>
<dbReference type="Proteomes" id="UP000002494">
    <property type="component" value="Chromosome 18"/>
</dbReference>
<dbReference type="Bgee" id="ENSRNOG00000032878">
    <property type="expression patterns" value="Expressed in pancreas and 19 other cell types or tissues"/>
</dbReference>
<dbReference type="GO" id="GO:0005737">
    <property type="term" value="C:cytoplasm"/>
    <property type="evidence" value="ECO:0007669"/>
    <property type="project" value="UniProtKB-SubCell"/>
</dbReference>
<dbReference type="GO" id="GO:0005634">
    <property type="term" value="C:nucleus"/>
    <property type="evidence" value="ECO:0000318"/>
    <property type="project" value="GO_Central"/>
</dbReference>
<dbReference type="GO" id="GO:0140297">
    <property type="term" value="F:DNA-binding transcription factor binding"/>
    <property type="evidence" value="ECO:0000250"/>
    <property type="project" value="UniProtKB"/>
</dbReference>
<dbReference type="GO" id="GO:0008327">
    <property type="term" value="F:methyl-CpG binding"/>
    <property type="evidence" value="ECO:0000250"/>
    <property type="project" value="UniProtKB"/>
</dbReference>
<dbReference type="GO" id="GO:0043565">
    <property type="term" value="F:sequence-specific DNA binding"/>
    <property type="evidence" value="ECO:0000250"/>
    <property type="project" value="UniProtKB"/>
</dbReference>
<dbReference type="GO" id="GO:0008270">
    <property type="term" value="F:zinc ion binding"/>
    <property type="evidence" value="ECO:0000250"/>
    <property type="project" value="UniProtKB"/>
</dbReference>
<dbReference type="GO" id="GO:0000122">
    <property type="term" value="P:negative regulation of transcription by RNA polymerase II"/>
    <property type="evidence" value="ECO:0000250"/>
    <property type="project" value="UniProtKB"/>
</dbReference>
<dbReference type="GO" id="GO:0043467">
    <property type="term" value="P:regulation of generation of precursor metabolites and energy"/>
    <property type="evidence" value="ECO:0000266"/>
    <property type="project" value="RGD"/>
</dbReference>
<dbReference type="InterPro" id="IPR040388">
    <property type="entry name" value="CXXC4/CXXC5"/>
</dbReference>
<dbReference type="InterPro" id="IPR002857">
    <property type="entry name" value="Znf_CXXC"/>
</dbReference>
<dbReference type="PANTHER" id="PTHR13419:SF2">
    <property type="entry name" value="CXXC-TYPE ZINC FINGER PROTEIN 5"/>
    <property type="match status" value="1"/>
</dbReference>
<dbReference type="PANTHER" id="PTHR13419">
    <property type="entry name" value="ZINC FINGER-CONTAINING"/>
    <property type="match status" value="1"/>
</dbReference>
<dbReference type="Pfam" id="PF02008">
    <property type="entry name" value="zf-CXXC"/>
    <property type="match status" value="1"/>
</dbReference>
<dbReference type="PROSITE" id="PS51058">
    <property type="entry name" value="ZF_CXXC"/>
    <property type="match status" value="1"/>
</dbReference>
<name>CXXC5_RAT</name>
<protein>
    <recommendedName>
        <fullName>CXXC-type zinc finger protein 5</fullName>
    </recommendedName>
</protein>
<accession>Q5XIQ3</accession>
<sequence length="316" mass="32626">MSSLGGGSQDAGGSSSSSNTSSSSGSGQKAGGTDKSATVAATAPASVADDAPPPERRNKSGIISEPLNKSLRRSRPLSHYSSFGSSGGAGSMMGGESADKAAAAAASLLANGHDLAAAMAVDKSNPTSKHKSGAVASLLSKAERATELAAEGQLTLQQFAQSTEMLKRVVQEHLPLMSEAGAGLPDMEAVAGAEALNGQSDFPYLGAFPINPGLFIMTPAGVFLAESALHMAGLAEYPMQGELASAISSGKKKRKRCGMCAPCRRRINCEQCSSCRNRKTGHQICKFRKCEELKKKPSAALEKVMLPSGAAFRWFQ</sequence>